<reference key="1">
    <citation type="journal article" date="2007" name="PLoS Genet.">
        <title>Patterns and implications of gene gain and loss in the evolution of Prochlorococcus.</title>
        <authorList>
            <person name="Kettler G.C."/>
            <person name="Martiny A.C."/>
            <person name="Huang K."/>
            <person name="Zucker J."/>
            <person name="Coleman M.L."/>
            <person name="Rodrigue S."/>
            <person name="Chen F."/>
            <person name="Lapidus A."/>
            <person name="Ferriera S."/>
            <person name="Johnson J."/>
            <person name="Steglich C."/>
            <person name="Church G.M."/>
            <person name="Richardson P."/>
            <person name="Chisholm S.W."/>
        </authorList>
    </citation>
    <scope>NUCLEOTIDE SEQUENCE [LARGE SCALE GENOMIC DNA]</scope>
    <source>
        <strain>NATL1A</strain>
    </source>
</reference>
<keyword id="KW-0131">Cell cycle</keyword>
<keyword id="KW-0132">Cell division</keyword>
<keyword id="KW-0133">Cell shape</keyword>
<keyword id="KW-0961">Cell wall biogenesis/degradation</keyword>
<keyword id="KW-0963">Cytoplasm</keyword>
<keyword id="KW-0573">Peptidoglycan synthesis</keyword>
<keyword id="KW-0670">Pyruvate</keyword>
<keyword id="KW-0808">Transferase</keyword>
<evidence type="ECO:0000255" key="1">
    <source>
        <dbReference type="HAMAP-Rule" id="MF_00111"/>
    </source>
</evidence>
<organism>
    <name type="scientific">Prochlorococcus marinus (strain NATL1A)</name>
    <dbReference type="NCBI Taxonomy" id="167555"/>
    <lineage>
        <taxon>Bacteria</taxon>
        <taxon>Bacillati</taxon>
        <taxon>Cyanobacteriota</taxon>
        <taxon>Cyanophyceae</taxon>
        <taxon>Synechococcales</taxon>
        <taxon>Prochlorococcaceae</taxon>
        <taxon>Prochlorococcus</taxon>
    </lineage>
</organism>
<accession>A2C466</accession>
<name>MURA_PROM1</name>
<dbReference type="EC" id="2.5.1.7" evidence="1"/>
<dbReference type="EMBL" id="CP000553">
    <property type="protein sequence ID" value="ABM76276.1"/>
    <property type="molecule type" value="Genomic_DNA"/>
</dbReference>
<dbReference type="RefSeq" id="WP_011824277.1">
    <property type="nucleotide sequence ID" value="NC_008819.1"/>
</dbReference>
<dbReference type="SMR" id="A2C466"/>
<dbReference type="KEGG" id="pme:NATL1_17201"/>
<dbReference type="eggNOG" id="COG0766">
    <property type="taxonomic scope" value="Bacteria"/>
</dbReference>
<dbReference type="HOGENOM" id="CLU_027387_0_0_3"/>
<dbReference type="UniPathway" id="UPA00219"/>
<dbReference type="Proteomes" id="UP000002592">
    <property type="component" value="Chromosome"/>
</dbReference>
<dbReference type="GO" id="GO:0005737">
    <property type="term" value="C:cytoplasm"/>
    <property type="evidence" value="ECO:0007669"/>
    <property type="project" value="UniProtKB-SubCell"/>
</dbReference>
<dbReference type="GO" id="GO:0008760">
    <property type="term" value="F:UDP-N-acetylglucosamine 1-carboxyvinyltransferase activity"/>
    <property type="evidence" value="ECO:0007669"/>
    <property type="project" value="UniProtKB-UniRule"/>
</dbReference>
<dbReference type="GO" id="GO:0051301">
    <property type="term" value="P:cell division"/>
    <property type="evidence" value="ECO:0007669"/>
    <property type="project" value="UniProtKB-KW"/>
</dbReference>
<dbReference type="GO" id="GO:0071555">
    <property type="term" value="P:cell wall organization"/>
    <property type="evidence" value="ECO:0007669"/>
    <property type="project" value="UniProtKB-KW"/>
</dbReference>
<dbReference type="GO" id="GO:0009252">
    <property type="term" value="P:peptidoglycan biosynthetic process"/>
    <property type="evidence" value="ECO:0007669"/>
    <property type="project" value="UniProtKB-UniRule"/>
</dbReference>
<dbReference type="GO" id="GO:0008360">
    <property type="term" value="P:regulation of cell shape"/>
    <property type="evidence" value="ECO:0007669"/>
    <property type="project" value="UniProtKB-KW"/>
</dbReference>
<dbReference type="GO" id="GO:0019277">
    <property type="term" value="P:UDP-N-acetylgalactosamine biosynthetic process"/>
    <property type="evidence" value="ECO:0007669"/>
    <property type="project" value="InterPro"/>
</dbReference>
<dbReference type="CDD" id="cd01555">
    <property type="entry name" value="UdpNAET"/>
    <property type="match status" value="1"/>
</dbReference>
<dbReference type="FunFam" id="3.65.10.10:FF:000001">
    <property type="entry name" value="UDP-N-acetylglucosamine 1-carboxyvinyltransferase"/>
    <property type="match status" value="1"/>
</dbReference>
<dbReference type="Gene3D" id="3.65.10.10">
    <property type="entry name" value="Enolpyruvate transferase domain"/>
    <property type="match status" value="2"/>
</dbReference>
<dbReference type="HAMAP" id="MF_00111">
    <property type="entry name" value="MurA"/>
    <property type="match status" value="1"/>
</dbReference>
<dbReference type="InterPro" id="IPR001986">
    <property type="entry name" value="Enolpyruvate_Tfrase_dom"/>
</dbReference>
<dbReference type="InterPro" id="IPR036968">
    <property type="entry name" value="Enolpyruvate_Tfrase_sf"/>
</dbReference>
<dbReference type="InterPro" id="IPR050068">
    <property type="entry name" value="MurA_subfamily"/>
</dbReference>
<dbReference type="InterPro" id="IPR013792">
    <property type="entry name" value="RNA3'P_cycl/enolpyr_Trfase_a/b"/>
</dbReference>
<dbReference type="InterPro" id="IPR005750">
    <property type="entry name" value="UDP_GlcNAc_COvinyl_MurA"/>
</dbReference>
<dbReference type="NCBIfam" id="TIGR01072">
    <property type="entry name" value="murA"/>
    <property type="match status" value="1"/>
</dbReference>
<dbReference type="NCBIfam" id="NF006873">
    <property type="entry name" value="PRK09369.1"/>
    <property type="match status" value="1"/>
</dbReference>
<dbReference type="PANTHER" id="PTHR43783">
    <property type="entry name" value="UDP-N-ACETYLGLUCOSAMINE 1-CARBOXYVINYLTRANSFERASE"/>
    <property type="match status" value="1"/>
</dbReference>
<dbReference type="PANTHER" id="PTHR43783:SF1">
    <property type="entry name" value="UDP-N-ACETYLGLUCOSAMINE 1-CARBOXYVINYLTRANSFERASE"/>
    <property type="match status" value="1"/>
</dbReference>
<dbReference type="Pfam" id="PF00275">
    <property type="entry name" value="EPSP_synthase"/>
    <property type="match status" value="1"/>
</dbReference>
<dbReference type="SUPFAM" id="SSF55205">
    <property type="entry name" value="EPT/RTPC-like"/>
    <property type="match status" value="1"/>
</dbReference>
<gene>
    <name evidence="1" type="primary">murA</name>
    <name type="ordered locus">NATL1_17201</name>
</gene>
<proteinExistence type="inferred from homology"/>
<sequence>MSSVATIKRNIIPPHLEVKGGRPLSGILKVSGAKNSSLALMAAALLTKEKLLIQNVPELTDIEVMSEILRNLGAKLTKTNNSIEINSESIHNVELPYELVHSLRASFFCVGPLLTRLGEAKIPLPGGCNIGARPVDEHINGLKALGAEVEVINDVVKAKVSTKDKRLLGANITLKYPSVGATETILMASCLASGKTTISNPAREPEIQDLAKMLNSMGAKVFGAGTKRITILGVESLSGTSHCVIPDRIEAGTFLIAAAITRSPLIIGPVIPNHLSAVISKLKECGCSISQHGNHHLKIIPIEISGVDITTSPFPGFPTDLQAPFMSLMATAKGSSKIKERVFENRMQHVLELNKMGACIYLENNTAYIKGVKELVGSNVEGGDLRSSAAIILACLSAKGNSIFTGLEHLDRGYEKLEEKLTNAGSIISRKFDQITSHSSFSNKIISEDNIDTQKNAA</sequence>
<comment type="function">
    <text evidence="1">Cell wall formation. Adds enolpyruvyl to UDP-N-acetylglucosamine.</text>
</comment>
<comment type="catalytic activity">
    <reaction evidence="1">
        <text>phosphoenolpyruvate + UDP-N-acetyl-alpha-D-glucosamine = UDP-N-acetyl-3-O-(1-carboxyvinyl)-alpha-D-glucosamine + phosphate</text>
        <dbReference type="Rhea" id="RHEA:18681"/>
        <dbReference type="ChEBI" id="CHEBI:43474"/>
        <dbReference type="ChEBI" id="CHEBI:57705"/>
        <dbReference type="ChEBI" id="CHEBI:58702"/>
        <dbReference type="ChEBI" id="CHEBI:68483"/>
        <dbReference type="EC" id="2.5.1.7"/>
    </reaction>
</comment>
<comment type="pathway">
    <text evidence="1">Cell wall biogenesis; peptidoglycan biosynthesis.</text>
</comment>
<comment type="subcellular location">
    <subcellularLocation>
        <location evidence="1">Cytoplasm</location>
    </subcellularLocation>
</comment>
<comment type="similarity">
    <text evidence="1">Belongs to the EPSP synthase family. MurA subfamily.</text>
</comment>
<protein>
    <recommendedName>
        <fullName evidence="1">UDP-N-acetylglucosamine 1-carboxyvinyltransferase</fullName>
        <ecNumber evidence="1">2.5.1.7</ecNumber>
    </recommendedName>
    <alternativeName>
        <fullName evidence="1">Enoylpyruvate transferase</fullName>
    </alternativeName>
    <alternativeName>
        <fullName evidence="1">UDP-N-acetylglucosamine enolpyruvyl transferase</fullName>
        <shortName evidence="1">EPT</shortName>
    </alternativeName>
</protein>
<feature type="chain" id="PRO_1000023067" description="UDP-N-acetylglucosamine 1-carboxyvinyltransferase">
    <location>
        <begin position="1"/>
        <end position="458"/>
    </location>
</feature>
<feature type="active site" description="Proton donor" evidence="1">
    <location>
        <position position="128"/>
    </location>
</feature>
<feature type="binding site" evidence="1">
    <location>
        <begin position="34"/>
        <end position="35"/>
    </location>
    <ligand>
        <name>phosphoenolpyruvate</name>
        <dbReference type="ChEBI" id="CHEBI:58702"/>
    </ligand>
</feature>
<feature type="binding site" evidence="1">
    <location>
        <position position="104"/>
    </location>
    <ligand>
        <name>UDP-N-acetyl-alpha-D-glucosamine</name>
        <dbReference type="ChEBI" id="CHEBI:57705"/>
    </ligand>
</feature>
<feature type="binding site" evidence="1">
    <location>
        <position position="320"/>
    </location>
    <ligand>
        <name>UDP-N-acetyl-alpha-D-glucosamine</name>
        <dbReference type="ChEBI" id="CHEBI:57705"/>
    </ligand>
</feature>
<feature type="binding site" evidence="1">
    <location>
        <position position="342"/>
    </location>
    <ligand>
        <name>UDP-N-acetyl-alpha-D-glucosamine</name>
        <dbReference type="ChEBI" id="CHEBI:57705"/>
    </ligand>
</feature>
<feature type="modified residue" description="2-(S-cysteinyl)pyruvic acid O-phosphothioketal" evidence="1">
    <location>
        <position position="128"/>
    </location>
</feature>